<organism>
    <name type="scientific">Laribacter hongkongensis (strain HLHK9)</name>
    <dbReference type="NCBI Taxonomy" id="557598"/>
    <lineage>
        <taxon>Bacteria</taxon>
        <taxon>Pseudomonadati</taxon>
        <taxon>Pseudomonadota</taxon>
        <taxon>Betaproteobacteria</taxon>
        <taxon>Neisseriales</taxon>
        <taxon>Aquaspirillaceae</taxon>
        <taxon>Laribacter</taxon>
    </lineage>
</organism>
<comment type="function">
    <text evidence="1">Binds directly to 16S ribosomal RNA.</text>
</comment>
<comment type="similarity">
    <text evidence="1">Belongs to the bacterial ribosomal protein bS20 family.</text>
</comment>
<protein>
    <recommendedName>
        <fullName evidence="1">Small ribosomal subunit protein bS20</fullName>
    </recommendedName>
    <alternativeName>
        <fullName evidence="3">30S ribosomal protein S20</fullName>
    </alternativeName>
</protein>
<evidence type="ECO:0000255" key="1">
    <source>
        <dbReference type="HAMAP-Rule" id="MF_00500"/>
    </source>
</evidence>
<evidence type="ECO:0000256" key="2">
    <source>
        <dbReference type="SAM" id="MobiDB-lite"/>
    </source>
</evidence>
<evidence type="ECO:0000305" key="3"/>
<gene>
    <name evidence="1" type="primary">rpsT</name>
    <name type="ordered locus">LHK_02500</name>
</gene>
<dbReference type="EMBL" id="CP001154">
    <property type="protein sequence ID" value="ACO75482.1"/>
    <property type="molecule type" value="Genomic_DNA"/>
</dbReference>
<dbReference type="RefSeq" id="WP_012697968.1">
    <property type="nucleotide sequence ID" value="NC_012559.1"/>
</dbReference>
<dbReference type="SMR" id="C1DBS9"/>
<dbReference type="STRING" id="557598.LHK_02500"/>
<dbReference type="GeneID" id="75110115"/>
<dbReference type="KEGG" id="lhk:LHK_02500"/>
<dbReference type="eggNOG" id="COG0268">
    <property type="taxonomic scope" value="Bacteria"/>
</dbReference>
<dbReference type="HOGENOM" id="CLU_160655_4_0_4"/>
<dbReference type="Proteomes" id="UP000002010">
    <property type="component" value="Chromosome"/>
</dbReference>
<dbReference type="GO" id="GO:0005829">
    <property type="term" value="C:cytosol"/>
    <property type="evidence" value="ECO:0007669"/>
    <property type="project" value="TreeGrafter"/>
</dbReference>
<dbReference type="GO" id="GO:0015935">
    <property type="term" value="C:small ribosomal subunit"/>
    <property type="evidence" value="ECO:0007669"/>
    <property type="project" value="TreeGrafter"/>
</dbReference>
<dbReference type="GO" id="GO:0070181">
    <property type="term" value="F:small ribosomal subunit rRNA binding"/>
    <property type="evidence" value="ECO:0007669"/>
    <property type="project" value="TreeGrafter"/>
</dbReference>
<dbReference type="GO" id="GO:0003735">
    <property type="term" value="F:structural constituent of ribosome"/>
    <property type="evidence" value="ECO:0007669"/>
    <property type="project" value="InterPro"/>
</dbReference>
<dbReference type="GO" id="GO:0006412">
    <property type="term" value="P:translation"/>
    <property type="evidence" value="ECO:0007669"/>
    <property type="project" value="UniProtKB-UniRule"/>
</dbReference>
<dbReference type="FunFam" id="1.20.58.110:FF:000001">
    <property type="entry name" value="30S ribosomal protein S20"/>
    <property type="match status" value="1"/>
</dbReference>
<dbReference type="Gene3D" id="1.20.58.110">
    <property type="entry name" value="Ribosomal protein S20"/>
    <property type="match status" value="1"/>
</dbReference>
<dbReference type="HAMAP" id="MF_00500">
    <property type="entry name" value="Ribosomal_bS20"/>
    <property type="match status" value="1"/>
</dbReference>
<dbReference type="InterPro" id="IPR002583">
    <property type="entry name" value="Ribosomal_bS20"/>
</dbReference>
<dbReference type="InterPro" id="IPR036510">
    <property type="entry name" value="Ribosomal_bS20_sf"/>
</dbReference>
<dbReference type="NCBIfam" id="TIGR00029">
    <property type="entry name" value="S20"/>
    <property type="match status" value="1"/>
</dbReference>
<dbReference type="PANTHER" id="PTHR33398">
    <property type="entry name" value="30S RIBOSOMAL PROTEIN S20"/>
    <property type="match status" value="1"/>
</dbReference>
<dbReference type="PANTHER" id="PTHR33398:SF1">
    <property type="entry name" value="SMALL RIBOSOMAL SUBUNIT PROTEIN BS20C"/>
    <property type="match status" value="1"/>
</dbReference>
<dbReference type="Pfam" id="PF01649">
    <property type="entry name" value="Ribosomal_S20p"/>
    <property type="match status" value="1"/>
</dbReference>
<dbReference type="SUPFAM" id="SSF46992">
    <property type="entry name" value="Ribosomal protein S20"/>
    <property type="match status" value="1"/>
</dbReference>
<sequence length="87" mass="9378">MANSAQARKRARQSLKARAHNASLRTAYRTAVKKVIKAVEAGDKAAAQAQLVTSTSIMDRIADKGVFHKNKASRQKSRLSAAIKAMA</sequence>
<keyword id="KW-1185">Reference proteome</keyword>
<keyword id="KW-0687">Ribonucleoprotein</keyword>
<keyword id="KW-0689">Ribosomal protein</keyword>
<keyword id="KW-0694">RNA-binding</keyword>
<keyword id="KW-0699">rRNA-binding</keyword>
<accession>C1DBS9</accession>
<proteinExistence type="inferred from homology"/>
<reference key="1">
    <citation type="journal article" date="2009" name="PLoS Genet.">
        <title>The complete genome and proteome of Laribacter hongkongensis reveal potential mechanisms for adaptations to different temperatures and habitats.</title>
        <authorList>
            <person name="Woo P.C.Y."/>
            <person name="Lau S.K.P."/>
            <person name="Tse H."/>
            <person name="Teng J.L.L."/>
            <person name="Curreem S.O."/>
            <person name="Tsang A.K.L."/>
            <person name="Fan R.Y.Y."/>
            <person name="Wong G.K.M."/>
            <person name="Huang Y."/>
            <person name="Loman N.J."/>
            <person name="Snyder L.A.S."/>
            <person name="Cai J.J."/>
            <person name="Huang J.-D."/>
            <person name="Mak W."/>
            <person name="Pallen M.J."/>
            <person name="Lok S."/>
            <person name="Yuen K.-Y."/>
        </authorList>
    </citation>
    <scope>NUCLEOTIDE SEQUENCE [LARGE SCALE GENOMIC DNA]</scope>
    <source>
        <strain>HLHK9</strain>
    </source>
</reference>
<name>RS20_LARHH</name>
<feature type="chain" id="PRO_1000194249" description="Small ribosomal subunit protein bS20">
    <location>
        <begin position="1"/>
        <end position="87"/>
    </location>
</feature>
<feature type="region of interest" description="Disordered" evidence="2">
    <location>
        <begin position="1"/>
        <end position="22"/>
    </location>
</feature>
<feature type="compositionally biased region" description="Basic residues" evidence="2">
    <location>
        <begin position="7"/>
        <end position="19"/>
    </location>
</feature>